<feature type="signal peptide" evidence="1">
    <location>
        <begin position="1"/>
        <end position="20"/>
    </location>
</feature>
<feature type="chain" id="PRO_0000461387" description="C-type lectin mosGCTL-1" evidence="1">
    <location>
        <begin position="21"/>
        <end position="160"/>
    </location>
</feature>
<feature type="domain" description="C-type lectin" evidence="2">
    <location>
        <begin position="23"/>
        <end position="140"/>
    </location>
</feature>
<feature type="glycosylation site" description="N-linked (GlcNAc...) asparagine" evidence="3">
    <location>
        <position position="76"/>
    </location>
</feature>
<feature type="disulfide bond" evidence="2">
    <location>
        <begin position="44"/>
        <end position="140"/>
    </location>
</feature>
<feature type="disulfide bond" evidence="2">
    <location>
        <begin position="120"/>
        <end position="140"/>
    </location>
</feature>
<protein>
    <recommendedName>
        <fullName evidence="6">C-type lectin mosGCTL-1</fullName>
    </recommendedName>
    <alternativeName>
        <fullName evidence="5">Mosquito galactose-specific binding C-type lectin</fullName>
        <shortName evidence="5">mosGCTL-1</shortName>
    </alternativeName>
</protein>
<comment type="function">
    <text evidence="6">Putative lectin.</text>
</comment>
<comment type="function">
    <text evidence="4">(Microbial infection) Facilitates West Nile virus infection in mosquitoes probably via capturing viral particles and presenting them to a ligand on the cell surface, thereby facilitating viral entry.</text>
</comment>
<comment type="subunit">
    <text evidence="4">Interacts with putative receptor-type tyrosine-protein phosphatase mosPTP-1; the interaction probably mediates the recruitment of West Nile virus particles in complex with C-type lectin mosGCTL-1 to the cell surface.</text>
</comment>
<comment type="subunit">
    <text evidence="4">(Microbial infection) Interacts with envelope protein E and virions of West Nile virus in a calcium-dependent manner.</text>
</comment>
<comment type="interaction">
    <interactant intactId="EBI-2912457">
        <id>Q17NZ6</id>
    </interactant>
    <interactant intactId="EBI-2912506">
        <id>Q16K62</id>
        <label>AAEL013105</label>
    </interactant>
    <organismsDiffer>false</organismsDiffer>
    <experiments>3</experiments>
</comment>
<comment type="interaction">
    <interactant intactId="EBI-2912457">
        <id>Q17NZ6</id>
    </interactant>
    <interactant intactId="EBI-2912469">
        <id>PRO_0000037746</id>
        <dbReference type="UniProtKB" id="P06935"/>
    </interactant>
    <organismsDiffer>true</organismsDiffer>
    <experiments>5</experiments>
</comment>
<comment type="subcellular location">
    <subcellularLocation>
        <location evidence="6">Secreted</location>
    </subcellularLocation>
</comment>
<comment type="tissue specificity">
    <text evidence="4">Female salivary gland (at protein level).</text>
</comment>
<comment type="induction">
    <text evidence="4">(Microbial infection) Up-regulated in salivary gland following infection with West Nile virus (at protein level) (PubMed:20797779). Up-regulated in hemolymph and midgut following infection with West Nile virus (PubMed:20797779).</text>
</comment>
<comment type="disruption phenotype">
    <text evidence="4">(Microbial infection) RNAi-mediated knockdown results in reduced West Nile virus infection levels.</text>
</comment>
<comment type="disruption phenotype">
    <text evidence="4">(Microbial infection) RNAi-mediated knockdown does not affect infection levels with dengue virus.</text>
</comment>
<comment type="miscellaneous">
    <text evidence="4">Antisera against the protein added to infectious blood meal blocks the interaction between mosGCTL-1 and envelope protein E of West Nile virus and reduces West Nile virus infection after feeding.</text>
</comment>
<accession>Q17NZ6</accession>
<accession>A0A1S4EW72</accession>
<name>GCTL1_AEDAE</name>
<organism evidence="7">
    <name type="scientific">Aedes aegypti</name>
    <name type="common">Yellowfever mosquito</name>
    <name type="synonym">Culex aegypti</name>
    <dbReference type="NCBI Taxonomy" id="7159"/>
    <lineage>
        <taxon>Eukaryota</taxon>
        <taxon>Metazoa</taxon>
        <taxon>Ecdysozoa</taxon>
        <taxon>Arthropoda</taxon>
        <taxon>Hexapoda</taxon>
        <taxon>Insecta</taxon>
        <taxon>Pterygota</taxon>
        <taxon>Neoptera</taxon>
        <taxon>Endopterygota</taxon>
        <taxon>Diptera</taxon>
        <taxon>Nematocera</taxon>
        <taxon>Culicoidea</taxon>
        <taxon>Culicidae</taxon>
        <taxon>Culicinae</taxon>
        <taxon>Aedini</taxon>
        <taxon>Aedes</taxon>
        <taxon>Stegomyia</taxon>
    </lineage>
</organism>
<reference evidence="7" key="1">
    <citation type="journal article" date="2018" name="Nature">
        <title>Improved reference genome of Aedes aegypti informs arbovirus vector control.</title>
        <authorList>
            <person name="Matthews B.J."/>
            <person name="Dudchenko O."/>
            <person name="Kingan S.B."/>
            <person name="Koren S."/>
            <person name="Antoshechkin I."/>
            <person name="Crawford J.E."/>
            <person name="Glassford W.J."/>
            <person name="Herre M."/>
            <person name="Redmond S.N."/>
            <person name="Rose N.H."/>
            <person name="Weedall G.D."/>
            <person name="Wu Y."/>
            <person name="Batra S.S."/>
            <person name="Brito-Sierra C.A."/>
            <person name="Buckingham S.D."/>
            <person name="Campbell C.L."/>
            <person name="Chan S."/>
            <person name="Cox E."/>
            <person name="Evans B.R."/>
            <person name="Fansiri T."/>
            <person name="Filipovic I."/>
            <person name="Fontaine A."/>
            <person name="Gloria-Soria A."/>
            <person name="Hall R."/>
            <person name="Joardar V.S."/>
            <person name="Jones A.K."/>
            <person name="Kay R.G.G."/>
            <person name="Kodali V.K."/>
            <person name="Lee J."/>
            <person name="Lycett G.J."/>
            <person name="Mitchell S.N."/>
            <person name="Muehling J."/>
            <person name="Murphy M.R."/>
            <person name="Omer A.D."/>
            <person name="Partridge F.A."/>
            <person name="Peluso P."/>
            <person name="Aiden A.P."/>
            <person name="Ramasamy V."/>
            <person name="Rasic G."/>
            <person name="Roy S."/>
            <person name="Saavedra-Rodriguez K."/>
            <person name="Sharan S."/>
            <person name="Sharma A."/>
            <person name="Smith M.L."/>
            <person name="Turner J."/>
            <person name="Weakley A.M."/>
            <person name="Zhao Z."/>
            <person name="Akbari O.S."/>
            <person name="Black W.C. IV"/>
            <person name="Cao H."/>
            <person name="Darby A.C."/>
            <person name="Hill C.A."/>
            <person name="Johnston J.S."/>
            <person name="Murphy T.D."/>
            <person name="Raikhel A.S."/>
            <person name="Sattelle D.B."/>
            <person name="Sharakhov I.V."/>
            <person name="White B.J."/>
            <person name="Zhao L."/>
            <person name="Aiden E.L."/>
            <person name="Mann R.S."/>
            <person name="Lambrechts L."/>
            <person name="Powell J.R."/>
            <person name="Sharakhova M.V."/>
            <person name="Tu Z."/>
            <person name="Robertson H.M."/>
            <person name="McBride C.S."/>
            <person name="Hastie A.R."/>
            <person name="Korlach J."/>
            <person name="Neafsey D.E."/>
            <person name="Phillippy A.M."/>
            <person name="Vosshall L.B."/>
        </authorList>
    </citation>
    <scope>NUCLEOTIDE SEQUENCE [LARGE SCALE GENOMIC DNA]</scope>
    <source>
        <strain evidence="7">LVP_AGWG</strain>
    </source>
</reference>
<reference evidence="6" key="2">
    <citation type="journal article" date="2010" name="Cell">
        <title>A C-type lectin collaborates with a CD45 phosphatase homolog to facilitate West Nile virus infection of mosquitoes.</title>
        <authorList>
            <person name="Cheng G."/>
            <person name="Cox J."/>
            <person name="Wang P."/>
            <person name="Krishnan M.N."/>
            <person name="Dai J."/>
            <person name="Qian F."/>
            <person name="Anderson J.F."/>
            <person name="Fikrig E."/>
        </authorList>
    </citation>
    <scope>FUNCTION (MICROBIAL INFECTION)</scope>
    <scope>INTERACTION WITH RECEPTOR-TYPE TYROSINE-PROTEIN PHOSPHATASE MOSPTP-1</scope>
    <scope>INTERACTION WITH ENVELOPE PROTEIN E AND VIRIONS OF WEST NILE VIRUS</scope>
    <scope>TISSUE SPECIFICITY</scope>
    <scope>INDUCTION (MICROBIAL INFECTION)</scope>
    <scope>DISRUPTION PHENOTYPE (MICROBIAL INFECTION)</scope>
</reference>
<dbReference type="RefSeq" id="NP_001394496.1">
    <property type="nucleotide sequence ID" value="NM_001407567.1"/>
</dbReference>
<dbReference type="RefSeq" id="XP_001647954.1">
    <property type="nucleotide sequence ID" value="XM_001647904.1"/>
</dbReference>
<dbReference type="SMR" id="Q17NZ6"/>
<dbReference type="FunCoup" id="Q17NZ6">
    <property type="interactions" value="23"/>
</dbReference>
<dbReference type="IntAct" id="Q17NZ6">
    <property type="interactions" value="2"/>
</dbReference>
<dbReference type="STRING" id="7159.Q17NZ6"/>
<dbReference type="PaxDb" id="7159-AAEL000563-PA"/>
<dbReference type="EnsemblMetazoa" id="AAEL000563-RA">
    <property type="protein sequence ID" value="AAEL000563-PA"/>
    <property type="gene ID" value="AAEL000563"/>
</dbReference>
<dbReference type="GeneID" id="5563672"/>
<dbReference type="KEGG" id="aag:5563672"/>
<dbReference type="VEuPathDB" id="VectorBase:AAEL000563"/>
<dbReference type="eggNOG" id="KOG4297">
    <property type="taxonomic scope" value="Eukaryota"/>
</dbReference>
<dbReference type="HOGENOM" id="CLU_049894_10_0_1"/>
<dbReference type="InParanoid" id="Q17NZ6"/>
<dbReference type="OMA" id="ARHRFIC"/>
<dbReference type="OrthoDB" id="7758422at2759"/>
<dbReference type="Proteomes" id="UP000008820">
    <property type="component" value="Chromosome 3"/>
</dbReference>
<dbReference type="GO" id="GO:0005576">
    <property type="term" value="C:extracellular region"/>
    <property type="evidence" value="ECO:0007669"/>
    <property type="project" value="UniProtKB-SubCell"/>
</dbReference>
<dbReference type="GO" id="GO:0030246">
    <property type="term" value="F:carbohydrate binding"/>
    <property type="evidence" value="ECO:0007669"/>
    <property type="project" value="UniProtKB-KW"/>
</dbReference>
<dbReference type="CDD" id="cd00037">
    <property type="entry name" value="CLECT"/>
    <property type="match status" value="1"/>
</dbReference>
<dbReference type="Gene3D" id="3.10.100.10">
    <property type="entry name" value="Mannose-Binding Protein A, subunit A"/>
    <property type="match status" value="1"/>
</dbReference>
<dbReference type="InterPro" id="IPR001304">
    <property type="entry name" value="C-type_lectin-like"/>
</dbReference>
<dbReference type="InterPro" id="IPR016186">
    <property type="entry name" value="C-type_lectin-like/link_sf"/>
</dbReference>
<dbReference type="InterPro" id="IPR050111">
    <property type="entry name" value="C-type_lectin/snaclec_domain"/>
</dbReference>
<dbReference type="InterPro" id="IPR016187">
    <property type="entry name" value="CTDL_fold"/>
</dbReference>
<dbReference type="PANTHER" id="PTHR22803">
    <property type="entry name" value="MANNOSE, PHOSPHOLIPASE, LECTIN RECEPTOR RELATED"/>
    <property type="match status" value="1"/>
</dbReference>
<dbReference type="Pfam" id="PF00059">
    <property type="entry name" value="Lectin_C"/>
    <property type="match status" value="1"/>
</dbReference>
<dbReference type="SMART" id="SM00034">
    <property type="entry name" value="CLECT"/>
    <property type="match status" value="1"/>
</dbReference>
<dbReference type="SUPFAM" id="SSF56436">
    <property type="entry name" value="C-type lectin-like"/>
    <property type="match status" value="1"/>
</dbReference>
<dbReference type="PROSITE" id="PS50041">
    <property type="entry name" value="C_TYPE_LECTIN_2"/>
    <property type="match status" value="1"/>
</dbReference>
<keyword id="KW-1015">Disulfide bond</keyword>
<keyword id="KW-0325">Glycoprotein</keyword>
<keyword id="KW-0945">Host-virus interaction</keyword>
<keyword id="KW-0430">Lectin</keyword>
<keyword id="KW-1185">Reference proteome</keyword>
<keyword id="KW-0964">Secreted</keyword>
<keyword id="KW-0732">Signal</keyword>
<proteinExistence type="evidence at protein level"/>
<sequence>MLTKGITLILLLVLVHSSHGDSTPNRKFYIPSIRANWFKANEFCNSLKMRLVAIRSQEDNDAVARYVRTTSKFTDNCSFWIGASDLADEGTFVWVATGEEVTYTNWRENEPNNEGGNEDCIQLAYIPALNYHWSWNDNTCAGQSLYFICESVECDCVQPF</sequence>
<evidence type="ECO:0000255" key="1"/>
<evidence type="ECO:0000255" key="2">
    <source>
        <dbReference type="PROSITE-ProRule" id="PRU00040"/>
    </source>
</evidence>
<evidence type="ECO:0000255" key="3">
    <source>
        <dbReference type="PROSITE-ProRule" id="PRU00498"/>
    </source>
</evidence>
<evidence type="ECO:0000269" key="4">
    <source>
    </source>
</evidence>
<evidence type="ECO:0000303" key="5">
    <source>
    </source>
</evidence>
<evidence type="ECO:0000305" key="6"/>
<evidence type="ECO:0000312" key="7">
    <source>
        <dbReference type="Proteomes" id="UP000008820"/>
    </source>
</evidence>